<name>HSLU_RICRO</name>
<evidence type="ECO:0000255" key="1">
    <source>
        <dbReference type="HAMAP-Rule" id="MF_00249"/>
    </source>
</evidence>
<reference key="1">
    <citation type="journal article" date="2008" name="Infect. Immun.">
        <title>Genomic comparison of virulent Rickettsia rickettsii Sheila Smith and avirulent Rickettsia rickettsii Iowa.</title>
        <authorList>
            <person name="Ellison D.W."/>
            <person name="Clark T.R."/>
            <person name="Sturdevant D.E."/>
            <person name="Virtaneva K."/>
            <person name="Porcella S.F."/>
            <person name="Hackstadt T."/>
        </authorList>
    </citation>
    <scope>NUCLEOTIDE SEQUENCE [LARGE SCALE GENOMIC DNA]</scope>
    <source>
        <strain>Iowa</strain>
    </source>
</reference>
<protein>
    <recommendedName>
        <fullName evidence="1">ATP-dependent protease ATPase subunit HslU</fullName>
    </recommendedName>
    <alternativeName>
        <fullName evidence="1">Unfoldase HslU</fullName>
    </alternativeName>
</protein>
<dbReference type="EMBL" id="CP000766">
    <property type="protein sequence ID" value="ABY72398.1"/>
    <property type="molecule type" value="Genomic_DNA"/>
</dbReference>
<dbReference type="RefSeq" id="WP_012150639.1">
    <property type="nucleotide sequence ID" value="NC_010263.3"/>
</dbReference>
<dbReference type="SMR" id="B0BX22"/>
<dbReference type="GeneID" id="79937201"/>
<dbReference type="KEGG" id="rrj:RrIowa_0518"/>
<dbReference type="eggNOG" id="COG1220">
    <property type="taxonomic scope" value="Bacteria"/>
</dbReference>
<dbReference type="HOGENOM" id="CLU_033123_0_0_5"/>
<dbReference type="Proteomes" id="UP000000796">
    <property type="component" value="Chromosome"/>
</dbReference>
<dbReference type="GO" id="GO:0009376">
    <property type="term" value="C:HslUV protease complex"/>
    <property type="evidence" value="ECO:0007669"/>
    <property type="project" value="UniProtKB-UniRule"/>
</dbReference>
<dbReference type="GO" id="GO:0005524">
    <property type="term" value="F:ATP binding"/>
    <property type="evidence" value="ECO:0007669"/>
    <property type="project" value="UniProtKB-UniRule"/>
</dbReference>
<dbReference type="GO" id="GO:0016887">
    <property type="term" value="F:ATP hydrolysis activity"/>
    <property type="evidence" value="ECO:0007669"/>
    <property type="project" value="InterPro"/>
</dbReference>
<dbReference type="GO" id="GO:0008233">
    <property type="term" value="F:peptidase activity"/>
    <property type="evidence" value="ECO:0007669"/>
    <property type="project" value="InterPro"/>
</dbReference>
<dbReference type="GO" id="GO:0036402">
    <property type="term" value="F:proteasome-activating activity"/>
    <property type="evidence" value="ECO:0007669"/>
    <property type="project" value="UniProtKB-UniRule"/>
</dbReference>
<dbReference type="GO" id="GO:0043335">
    <property type="term" value="P:protein unfolding"/>
    <property type="evidence" value="ECO:0007669"/>
    <property type="project" value="UniProtKB-UniRule"/>
</dbReference>
<dbReference type="GO" id="GO:0051603">
    <property type="term" value="P:proteolysis involved in protein catabolic process"/>
    <property type="evidence" value="ECO:0007669"/>
    <property type="project" value="TreeGrafter"/>
</dbReference>
<dbReference type="CDD" id="cd19498">
    <property type="entry name" value="RecA-like_HslU"/>
    <property type="match status" value="1"/>
</dbReference>
<dbReference type="FunFam" id="3.40.50.300:FF:000213">
    <property type="entry name" value="ATP-dependent protease ATPase subunit HslU"/>
    <property type="match status" value="1"/>
</dbReference>
<dbReference type="Gene3D" id="1.10.8.60">
    <property type="match status" value="1"/>
</dbReference>
<dbReference type="Gene3D" id="1.10.8.10">
    <property type="entry name" value="DNA helicase RuvA subunit, C-terminal domain"/>
    <property type="match status" value="1"/>
</dbReference>
<dbReference type="Gene3D" id="3.40.50.300">
    <property type="entry name" value="P-loop containing nucleotide triphosphate hydrolases"/>
    <property type="match status" value="2"/>
</dbReference>
<dbReference type="HAMAP" id="MF_00249">
    <property type="entry name" value="HslU"/>
    <property type="match status" value="1"/>
</dbReference>
<dbReference type="InterPro" id="IPR003593">
    <property type="entry name" value="AAA+_ATPase"/>
</dbReference>
<dbReference type="InterPro" id="IPR050052">
    <property type="entry name" value="ATP-dep_Clp_protease_ClpX"/>
</dbReference>
<dbReference type="InterPro" id="IPR003959">
    <property type="entry name" value="ATPase_AAA_core"/>
</dbReference>
<dbReference type="InterPro" id="IPR019489">
    <property type="entry name" value="Clp_ATPase_C"/>
</dbReference>
<dbReference type="InterPro" id="IPR004491">
    <property type="entry name" value="HslU"/>
</dbReference>
<dbReference type="InterPro" id="IPR027417">
    <property type="entry name" value="P-loop_NTPase"/>
</dbReference>
<dbReference type="NCBIfam" id="TIGR00390">
    <property type="entry name" value="hslU"/>
    <property type="match status" value="1"/>
</dbReference>
<dbReference type="NCBIfam" id="NF003544">
    <property type="entry name" value="PRK05201.1"/>
    <property type="match status" value="1"/>
</dbReference>
<dbReference type="PANTHER" id="PTHR48102">
    <property type="entry name" value="ATP-DEPENDENT CLP PROTEASE ATP-BINDING SUBUNIT CLPX-LIKE, MITOCHONDRIAL-RELATED"/>
    <property type="match status" value="1"/>
</dbReference>
<dbReference type="PANTHER" id="PTHR48102:SF3">
    <property type="entry name" value="ATP-DEPENDENT PROTEASE ATPASE SUBUNIT HSLU"/>
    <property type="match status" value="1"/>
</dbReference>
<dbReference type="Pfam" id="PF00004">
    <property type="entry name" value="AAA"/>
    <property type="match status" value="1"/>
</dbReference>
<dbReference type="Pfam" id="PF07724">
    <property type="entry name" value="AAA_2"/>
    <property type="match status" value="1"/>
</dbReference>
<dbReference type="SMART" id="SM00382">
    <property type="entry name" value="AAA"/>
    <property type="match status" value="1"/>
</dbReference>
<dbReference type="SMART" id="SM01086">
    <property type="entry name" value="ClpB_D2-small"/>
    <property type="match status" value="1"/>
</dbReference>
<dbReference type="SUPFAM" id="SSF52540">
    <property type="entry name" value="P-loop containing nucleoside triphosphate hydrolases"/>
    <property type="match status" value="1"/>
</dbReference>
<sequence>MKATKTTYKKDPMGLTPSQIVNELNRFIVGQEKAKKAVAIALRNRCRRKRVEGNLRNEIVPKNILMIGSTGVGKTEIARRLATLTNSPFYKIEATKFTEVGYVGRDVESIIRDLVEIAVNTEKTLAKTKVDIHAREKAIERILDSLVGKTSSSETREKFKEKILNGELDDTEIEISVADTTPVGGGSFEIPGMPGASMGVLNLGDMIGRALGSSKTKTKKMLVKDAMAIIIPEESEKLIDQEKIIQQAINLAENDGIVFIDEIDKIASTGSSRAKNAEISREGVQRDLLPLIEGTTVNTKYGPVKTDHILFIASGAFHIAKPSDLLPELQGRLPIRVELNSLTKDDMIKILLEPETSLIKQYSALIGTEDVRLEFAASAIEKIADYAITVNLEVEDIGARRLHTILENLLEDISFEASEMKGKKITIDDKFVENQLSKIITNLDLAKFVL</sequence>
<feature type="chain" id="PRO_1000078451" description="ATP-dependent protease ATPase subunit HslU">
    <location>
        <begin position="1"/>
        <end position="450"/>
    </location>
</feature>
<feature type="binding site" evidence="1">
    <location>
        <position position="29"/>
    </location>
    <ligand>
        <name>ATP</name>
        <dbReference type="ChEBI" id="CHEBI:30616"/>
    </ligand>
</feature>
<feature type="binding site" evidence="1">
    <location>
        <begin position="71"/>
        <end position="76"/>
    </location>
    <ligand>
        <name>ATP</name>
        <dbReference type="ChEBI" id="CHEBI:30616"/>
    </ligand>
</feature>
<feature type="binding site" evidence="1">
    <location>
        <position position="261"/>
    </location>
    <ligand>
        <name>ATP</name>
        <dbReference type="ChEBI" id="CHEBI:30616"/>
    </ligand>
</feature>
<feature type="binding site" evidence="1">
    <location>
        <position position="328"/>
    </location>
    <ligand>
        <name>ATP</name>
        <dbReference type="ChEBI" id="CHEBI:30616"/>
    </ligand>
</feature>
<feature type="binding site" evidence="1">
    <location>
        <position position="400"/>
    </location>
    <ligand>
        <name>ATP</name>
        <dbReference type="ChEBI" id="CHEBI:30616"/>
    </ligand>
</feature>
<comment type="function">
    <text evidence="1">ATPase subunit of a proteasome-like degradation complex; this subunit has chaperone activity. The binding of ATP and its subsequent hydrolysis by HslU are essential for unfolding of protein substrates subsequently hydrolyzed by HslV. HslU recognizes the N-terminal part of its protein substrates and unfolds these before they are guided to HslV for hydrolysis.</text>
</comment>
<comment type="subunit">
    <text evidence="1">A double ring-shaped homohexamer of HslV is capped on each side by a ring-shaped HslU homohexamer. The assembly of the HslU/HslV complex is dependent on binding of ATP.</text>
</comment>
<comment type="subcellular location">
    <subcellularLocation>
        <location evidence="1">Cytoplasm</location>
    </subcellularLocation>
</comment>
<comment type="similarity">
    <text evidence="1">Belongs to the ClpX chaperone family. HslU subfamily.</text>
</comment>
<organism>
    <name type="scientific">Rickettsia rickettsii (strain Iowa)</name>
    <dbReference type="NCBI Taxonomy" id="452659"/>
    <lineage>
        <taxon>Bacteria</taxon>
        <taxon>Pseudomonadati</taxon>
        <taxon>Pseudomonadota</taxon>
        <taxon>Alphaproteobacteria</taxon>
        <taxon>Rickettsiales</taxon>
        <taxon>Rickettsiaceae</taxon>
        <taxon>Rickettsieae</taxon>
        <taxon>Rickettsia</taxon>
        <taxon>spotted fever group</taxon>
    </lineage>
</organism>
<keyword id="KW-0067">ATP-binding</keyword>
<keyword id="KW-0143">Chaperone</keyword>
<keyword id="KW-0963">Cytoplasm</keyword>
<keyword id="KW-0547">Nucleotide-binding</keyword>
<accession>B0BX22</accession>
<proteinExistence type="inferred from homology"/>
<gene>
    <name evidence="1" type="primary">hslU</name>
    <name type="ordered locus">RrIowa_0518</name>
</gene>